<evidence type="ECO:0000255" key="1">
    <source>
        <dbReference type="HAMAP-Rule" id="MF_00102"/>
    </source>
</evidence>
<evidence type="ECO:0000305" key="2"/>
<protein>
    <recommendedName>
        <fullName evidence="1">4-hydroxy-tetrahydrodipicolinate reductase</fullName>
        <shortName evidence="1">HTPA reductase</shortName>
        <ecNumber evidence="1">1.17.1.8</ecNumber>
    </recommendedName>
</protein>
<comment type="function">
    <text evidence="1">Catalyzes the conversion of 4-hydroxy-tetrahydrodipicolinate (HTPA) to tetrahydrodipicolinate.</text>
</comment>
<comment type="catalytic activity">
    <reaction evidence="1">
        <text>(S)-2,3,4,5-tetrahydrodipicolinate + NAD(+) + H2O = (2S,4S)-4-hydroxy-2,3,4,5-tetrahydrodipicolinate + NADH + H(+)</text>
        <dbReference type="Rhea" id="RHEA:35323"/>
        <dbReference type="ChEBI" id="CHEBI:15377"/>
        <dbReference type="ChEBI" id="CHEBI:15378"/>
        <dbReference type="ChEBI" id="CHEBI:16845"/>
        <dbReference type="ChEBI" id="CHEBI:57540"/>
        <dbReference type="ChEBI" id="CHEBI:57945"/>
        <dbReference type="ChEBI" id="CHEBI:67139"/>
        <dbReference type="EC" id="1.17.1.8"/>
    </reaction>
</comment>
<comment type="catalytic activity">
    <reaction evidence="1">
        <text>(S)-2,3,4,5-tetrahydrodipicolinate + NADP(+) + H2O = (2S,4S)-4-hydroxy-2,3,4,5-tetrahydrodipicolinate + NADPH + H(+)</text>
        <dbReference type="Rhea" id="RHEA:35331"/>
        <dbReference type="ChEBI" id="CHEBI:15377"/>
        <dbReference type="ChEBI" id="CHEBI:15378"/>
        <dbReference type="ChEBI" id="CHEBI:16845"/>
        <dbReference type="ChEBI" id="CHEBI:57783"/>
        <dbReference type="ChEBI" id="CHEBI:58349"/>
        <dbReference type="ChEBI" id="CHEBI:67139"/>
        <dbReference type="EC" id="1.17.1.8"/>
    </reaction>
</comment>
<comment type="pathway">
    <text evidence="1">Amino-acid biosynthesis; L-lysine biosynthesis via DAP pathway; (S)-tetrahydrodipicolinate from L-aspartate: step 4/4.</text>
</comment>
<comment type="subcellular location">
    <subcellularLocation>
        <location evidence="1">Cytoplasm</location>
    </subcellularLocation>
</comment>
<comment type="similarity">
    <text evidence="1">Belongs to the DapB family.</text>
</comment>
<comment type="caution">
    <text evidence="2">Was originally thought to be a dihydrodipicolinate reductase (DHDPR), catalyzing the conversion of dihydrodipicolinate to tetrahydrodipicolinate. However, it was shown in E.coli that the substrate of the enzymatic reaction is not dihydrodipicolinate (DHDP) but in fact (2S,4S)-4-hydroxy-2,3,4,5-tetrahydrodipicolinic acid (HTPA), the product released by the DapA-catalyzed reaction.</text>
</comment>
<comment type="sequence caution" evidence="2">
    <conflict type="erroneous initiation">
        <sequence resource="EMBL-CDS" id="AAG42247"/>
    </conflict>
</comment>
<comment type="sequence caution" evidence="2">
    <conflict type="erroneous initiation">
        <sequence resource="EMBL-CDS" id="ABD30491"/>
    </conflict>
</comment>
<feature type="chain" id="PRO_0000141490" description="4-hydroxy-tetrahydrodipicolinate reductase">
    <location>
        <begin position="1"/>
        <end position="240"/>
    </location>
</feature>
<feature type="active site" description="Proton donor/acceptor" evidence="1">
    <location>
        <position position="135"/>
    </location>
</feature>
<feature type="active site" description="Proton donor" evidence="1">
    <location>
        <position position="139"/>
    </location>
</feature>
<feature type="binding site" evidence="1">
    <location>
        <begin position="79"/>
        <end position="81"/>
    </location>
    <ligand>
        <name>NAD(+)</name>
        <dbReference type="ChEBI" id="CHEBI:57540"/>
    </ligand>
</feature>
<feature type="binding site" evidence="1">
    <location>
        <begin position="103"/>
        <end position="106"/>
    </location>
    <ligand>
        <name>NAD(+)</name>
        <dbReference type="ChEBI" id="CHEBI:57540"/>
    </ligand>
</feature>
<feature type="binding site" evidence="1">
    <location>
        <position position="136"/>
    </location>
    <ligand>
        <name>(S)-2,3,4,5-tetrahydrodipicolinate</name>
        <dbReference type="ChEBI" id="CHEBI:16845"/>
    </ligand>
</feature>
<feature type="binding site" evidence="1">
    <location>
        <begin position="145"/>
        <end position="146"/>
    </location>
    <ligand>
        <name>(S)-2,3,4,5-tetrahydrodipicolinate</name>
        <dbReference type="ChEBI" id="CHEBI:16845"/>
    </ligand>
</feature>
<feature type="sequence conflict" description="In Ref. 1; AAG42247." evidence="2" ref="1">
    <original>K</original>
    <variation>G</variation>
    <location>
        <position position="230"/>
    </location>
</feature>
<dbReference type="EC" id="1.17.1.8" evidence="1"/>
<dbReference type="EMBL" id="AF306669">
    <property type="protein sequence ID" value="AAG42247.1"/>
    <property type="status" value="ALT_INIT"/>
    <property type="molecule type" value="Genomic_DNA"/>
</dbReference>
<dbReference type="EMBL" id="CP000253">
    <property type="protein sequence ID" value="ABD30491.1"/>
    <property type="status" value="ALT_INIT"/>
    <property type="molecule type" value="Genomic_DNA"/>
</dbReference>
<dbReference type="RefSeq" id="WP_000698235.1">
    <property type="nucleotide sequence ID" value="NZ_LS483365.1"/>
</dbReference>
<dbReference type="RefSeq" id="WP_011447012.1">
    <property type="nucleotide sequence ID" value="NC_007795.1"/>
</dbReference>
<dbReference type="RefSeq" id="YP_499924.1">
    <property type="nucleotide sequence ID" value="NC_007795.1"/>
</dbReference>
<dbReference type="SMR" id="Q9EZ11"/>
<dbReference type="STRING" id="93061.SAOUHSC_01397"/>
<dbReference type="PaxDb" id="1280-SAXN108_1412"/>
<dbReference type="GeneID" id="3920687"/>
<dbReference type="KEGG" id="sao:SAOUHSC_01397"/>
<dbReference type="PATRIC" id="fig|93061.5.peg.1278"/>
<dbReference type="eggNOG" id="COG0289">
    <property type="taxonomic scope" value="Bacteria"/>
</dbReference>
<dbReference type="HOGENOM" id="CLU_047479_2_2_9"/>
<dbReference type="OrthoDB" id="9790352at2"/>
<dbReference type="UniPathway" id="UPA00034">
    <property type="reaction ID" value="UER00018"/>
</dbReference>
<dbReference type="Proteomes" id="UP000008816">
    <property type="component" value="Chromosome"/>
</dbReference>
<dbReference type="GO" id="GO:0005829">
    <property type="term" value="C:cytosol"/>
    <property type="evidence" value="ECO:0000318"/>
    <property type="project" value="GO_Central"/>
</dbReference>
<dbReference type="GO" id="GO:0008839">
    <property type="term" value="F:4-hydroxy-tetrahydrodipicolinate reductase"/>
    <property type="evidence" value="ECO:0000318"/>
    <property type="project" value="GO_Central"/>
</dbReference>
<dbReference type="GO" id="GO:0051287">
    <property type="term" value="F:NAD binding"/>
    <property type="evidence" value="ECO:0007669"/>
    <property type="project" value="UniProtKB-UniRule"/>
</dbReference>
<dbReference type="GO" id="GO:0050661">
    <property type="term" value="F:NADP binding"/>
    <property type="evidence" value="ECO:0007669"/>
    <property type="project" value="UniProtKB-UniRule"/>
</dbReference>
<dbReference type="GO" id="GO:0016726">
    <property type="term" value="F:oxidoreductase activity, acting on CH or CH2 groups, NAD or NADP as acceptor"/>
    <property type="evidence" value="ECO:0007669"/>
    <property type="project" value="UniProtKB-UniRule"/>
</dbReference>
<dbReference type="GO" id="GO:0019877">
    <property type="term" value="P:diaminopimelate biosynthetic process"/>
    <property type="evidence" value="ECO:0000318"/>
    <property type="project" value="GO_Central"/>
</dbReference>
<dbReference type="GO" id="GO:0009089">
    <property type="term" value="P:lysine biosynthetic process via diaminopimelate"/>
    <property type="evidence" value="ECO:0007669"/>
    <property type="project" value="UniProtKB-UniRule"/>
</dbReference>
<dbReference type="CDD" id="cd02274">
    <property type="entry name" value="DHDPR_N"/>
    <property type="match status" value="1"/>
</dbReference>
<dbReference type="FunFam" id="3.30.360.10:FF:000009">
    <property type="entry name" value="4-hydroxy-tetrahydrodipicolinate reductase"/>
    <property type="match status" value="1"/>
</dbReference>
<dbReference type="Gene3D" id="3.30.360.10">
    <property type="entry name" value="Dihydrodipicolinate Reductase, domain 2"/>
    <property type="match status" value="1"/>
</dbReference>
<dbReference type="Gene3D" id="3.40.50.720">
    <property type="entry name" value="NAD(P)-binding Rossmann-like Domain"/>
    <property type="match status" value="1"/>
</dbReference>
<dbReference type="HAMAP" id="MF_00102">
    <property type="entry name" value="DapB"/>
    <property type="match status" value="1"/>
</dbReference>
<dbReference type="InterPro" id="IPR022663">
    <property type="entry name" value="DapB_C"/>
</dbReference>
<dbReference type="InterPro" id="IPR000846">
    <property type="entry name" value="DapB_N"/>
</dbReference>
<dbReference type="InterPro" id="IPR022664">
    <property type="entry name" value="DapB_N_CS"/>
</dbReference>
<dbReference type="InterPro" id="IPR023940">
    <property type="entry name" value="DHDPR_bac"/>
</dbReference>
<dbReference type="InterPro" id="IPR036291">
    <property type="entry name" value="NAD(P)-bd_dom_sf"/>
</dbReference>
<dbReference type="NCBIfam" id="TIGR00036">
    <property type="entry name" value="dapB"/>
    <property type="match status" value="1"/>
</dbReference>
<dbReference type="PANTHER" id="PTHR20836:SF7">
    <property type="entry name" value="4-HYDROXY-TETRAHYDRODIPICOLINATE REDUCTASE"/>
    <property type="match status" value="1"/>
</dbReference>
<dbReference type="PANTHER" id="PTHR20836">
    <property type="entry name" value="DIHYDRODIPICOLINATE REDUCTASE"/>
    <property type="match status" value="1"/>
</dbReference>
<dbReference type="Pfam" id="PF05173">
    <property type="entry name" value="DapB_C"/>
    <property type="match status" value="1"/>
</dbReference>
<dbReference type="Pfam" id="PF01113">
    <property type="entry name" value="DapB_N"/>
    <property type="match status" value="1"/>
</dbReference>
<dbReference type="PIRSF" id="PIRSF000161">
    <property type="entry name" value="DHPR"/>
    <property type="match status" value="1"/>
</dbReference>
<dbReference type="SUPFAM" id="SSF55347">
    <property type="entry name" value="Glyceraldehyde-3-phosphate dehydrogenase-like, C-terminal domain"/>
    <property type="match status" value="1"/>
</dbReference>
<dbReference type="SUPFAM" id="SSF51735">
    <property type="entry name" value="NAD(P)-binding Rossmann-fold domains"/>
    <property type="match status" value="1"/>
</dbReference>
<dbReference type="PROSITE" id="PS01298">
    <property type="entry name" value="DAPB"/>
    <property type="match status" value="1"/>
</dbReference>
<sequence>MKILLIGYGAMNQRVARLAEEKGHEIVGVIENTPKATTPYQQYQHIADVKGADVAIDFSNPNLLFPLLDEDFHLPLVVATTGEKEKLLNKLDELSQNMPVFFSANMSYGVHALTKILAAAVPLLDDFDIELTEAHHNKKVDAPSGTLEKLYDVIVSLKENVTPVYDRHELNEKRQPQDIGIHSIRGGTIVGEHEVLFAGTDETIQITHRAQSKDIFANGAIQAAERLVNKPNGFYTFDNL</sequence>
<reference key="1">
    <citation type="journal article" date="2001" name="Infect. Immun.">
        <title>Identification and analysis of Staphylococcus aureus components expressed by a model system of growth in serum.</title>
        <authorList>
            <person name="Wiltshire M.D."/>
            <person name="Foster S.J."/>
        </authorList>
    </citation>
    <scope>NUCLEOTIDE SEQUENCE [GENOMIC DNA]</scope>
</reference>
<reference key="2">
    <citation type="book" date="2006" name="Gram positive pathogens, 2nd edition">
        <title>The Staphylococcus aureus NCTC 8325 genome.</title>
        <editorList>
            <person name="Fischetti V."/>
            <person name="Novick R."/>
            <person name="Ferretti J."/>
            <person name="Portnoy D."/>
            <person name="Rood J."/>
        </editorList>
        <authorList>
            <person name="Gillaspy A.F."/>
            <person name="Worrell V."/>
            <person name="Orvis J."/>
            <person name="Roe B.A."/>
            <person name="Dyer D.W."/>
            <person name="Iandolo J.J."/>
        </authorList>
    </citation>
    <scope>NUCLEOTIDE SEQUENCE [LARGE SCALE GENOMIC DNA]</scope>
    <source>
        <strain>NCTC 8325 / PS 47</strain>
    </source>
</reference>
<gene>
    <name evidence="1" type="primary">dapB</name>
    <name type="ordered locus">SAOUHSC_01397</name>
</gene>
<keyword id="KW-0028">Amino-acid biosynthesis</keyword>
<keyword id="KW-0963">Cytoplasm</keyword>
<keyword id="KW-0220">Diaminopimelate biosynthesis</keyword>
<keyword id="KW-0457">Lysine biosynthesis</keyword>
<keyword id="KW-0520">NAD</keyword>
<keyword id="KW-0521">NADP</keyword>
<keyword id="KW-0560">Oxidoreductase</keyword>
<keyword id="KW-1185">Reference proteome</keyword>
<name>DAPB_STAA8</name>
<proteinExistence type="inferred from homology"/>
<accession>Q9EZ11</accession>
<accession>Q2FYN8</accession>
<organism>
    <name type="scientific">Staphylococcus aureus (strain NCTC 8325 / PS 47)</name>
    <dbReference type="NCBI Taxonomy" id="93061"/>
    <lineage>
        <taxon>Bacteria</taxon>
        <taxon>Bacillati</taxon>
        <taxon>Bacillota</taxon>
        <taxon>Bacilli</taxon>
        <taxon>Bacillales</taxon>
        <taxon>Staphylococcaceae</taxon>
        <taxon>Staphylococcus</taxon>
    </lineage>
</organism>